<evidence type="ECO:0000250" key="1"/>
<evidence type="ECO:0000305" key="2"/>
<comment type="catalytic activity">
    <reaction>
        <text>tRNA(His) + L-histidine + ATP = L-histidyl-tRNA(His) + AMP + diphosphate + H(+)</text>
        <dbReference type="Rhea" id="RHEA:17313"/>
        <dbReference type="Rhea" id="RHEA-COMP:9665"/>
        <dbReference type="Rhea" id="RHEA-COMP:9689"/>
        <dbReference type="ChEBI" id="CHEBI:15378"/>
        <dbReference type="ChEBI" id="CHEBI:30616"/>
        <dbReference type="ChEBI" id="CHEBI:33019"/>
        <dbReference type="ChEBI" id="CHEBI:57595"/>
        <dbReference type="ChEBI" id="CHEBI:78442"/>
        <dbReference type="ChEBI" id="CHEBI:78527"/>
        <dbReference type="ChEBI" id="CHEBI:456215"/>
        <dbReference type="EC" id="6.1.1.21"/>
    </reaction>
</comment>
<comment type="subunit">
    <text evidence="1">Homodimer.</text>
</comment>
<comment type="subcellular location">
    <subcellularLocation>
        <location evidence="1">Cytoplasm</location>
    </subcellularLocation>
</comment>
<comment type="similarity">
    <text evidence="2">Belongs to the class-II aminoacyl-tRNA synthetase family.</text>
</comment>
<feature type="chain" id="PRO_0000136198" description="Histidine--tRNA ligase">
    <location>
        <begin position="1"/>
        <end position="414"/>
    </location>
</feature>
<sequence length="414" mass="48324">MNFLQKPRGVKDWFGDELVYFNWIVKKIRSLAFNWGFSEVKTPLFENAQLFQRSNANADIVQKELYQFFDKSQRELALRPEATTPIVRLACENKLMQEANFPLKLFCIGSMYRYERPQNNRFREHWQFSCEVFGFSNLFIFLDTLLFANSLLEALGITGYVLKINNLANFETLSKWNKALKDYLTPYKLELTELSQKRLEKNPLRILDDKIDQKKSFVKNAPKITDFLDASAKQDSELLKTQLKKHNISFEWTDNLVRGLDYYTGFVFEYVKNQDTILAGGVYDNLVEELSSNPTPALGFACGIERLINCLEIDKKAFILNTKPKQMLVICLFEEALEELVWLAKLWREYNQVTIYPKVIKVDNGIRLANRLGYTFIGIVGKTDFDKKAITIKNLVSKQQTIYTWNELGERNVF</sequence>
<organism>
    <name type="scientific">Mycoplasma genitalium (strain ATCC 33530 / DSM 19775 / NCTC 10195 / G37)</name>
    <name type="common">Mycoplasmoides genitalium</name>
    <dbReference type="NCBI Taxonomy" id="243273"/>
    <lineage>
        <taxon>Bacteria</taxon>
        <taxon>Bacillati</taxon>
        <taxon>Mycoplasmatota</taxon>
        <taxon>Mycoplasmoidales</taxon>
        <taxon>Mycoplasmoidaceae</taxon>
        <taxon>Mycoplasmoides</taxon>
    </lineage>
</organism>
<dbReference type="EC" id="6.1.1.21"/>
<dbReference type="EMBL" id="L43967">
    <property type="protein sequence ID" value="AAC71251.1"/>
    <property type="molecule type" value="Genomic_DNA"/>
</dbReference>
<dbReference type="PIR" id="H64203">
    <property type="entry name" value="H64203"/>
</dbReference>
<dbReference type="RefSeq" id="WP_009885699.1">
    <property type="nucleotide sequence ID" value="NC_000908.2"/>
</dbReference>
<dbReference type="SMR" id="P47281"/>
<dbReference type="FunCoup" id="P47281">
    <property type="interactions" value="192"/>
</dbReference>
<dbReference type="STRING" id="243273.MG_035"/>
<dbReference type="GeneID" id="88282150"/>
<dbReference type="KEGG" id="mge:MG_035"/>
<dbReference type="eggNOG" id="COG0124">
    <property type="taxonomic scope" value="Bacteria"/>
</dbReference>
<dbReference type="HOGENOM" id="CLU_025113_1_1_14"/>
<dbReference type="InParanoid" id="P47281"/>
<dbReference type="OrthoDB" id="9800814at2"/>
<dbReference type="BioCyc" id="MGEN243273:G1GJ2-35-MONOMER"/>
<dbReference type="BRENDA" id="6.1.1.21">
    <property type="organism ID" value="3528"/>
</dbReference>
<dbReference type="Proteomes" id="UP000000807">
    <property type="component" value="Chromosome"/>
</dbReference>
<dbReference type="GO" id="GO:0005737">
    <property type="term" value="C:cytoplasm"/>
    <property type="evidence" value="ECO:0007669"/>
    <property type="project" value="UniProtKB-SubCell"/>
</dbReference>
<dbReference type="GO" id="GO:0005524">
    <property type="term" value="F:ATP binding"/>
    <property type="evidence" value="ECO:0007669"/>
    <property type="project" value="UniProtKB-UniRule"/>
</dbReference>
<dbReference type="GO" id="GO:0004821">
    <property type="term" value="F:histidine-tRNA ligase activity"/>
    <property type="evidence" value="ECO:0000318"/>
    <property type="project" value="GO_Central"/>
</dbReference>
<dbReference type="GO" id="GO:0006427">
    <property type="term" value="P:histidyl-tRNA aminoacylation"/>
    <property type="evidence" value="ECO:0000318"/>
    <property type="project" value="GO_Central"/>
</dbReference>
<dbReference type="CDD" id="cd00773">
    <property type="entry name" value="HisRS-like_core"/>
    <property type="match status" value="1"/>
</dbReference>
<dbReference type="FunFam" id="3.30.930.10:FF:000121">
    <property type="entry name" value="Histidine--tRNA ligase"/>
    <property type="match status" value="1"/>
</dbReference>
<dbReference type="FunFam" id="3.40.50.800:FF:000017">
    <property type="entry name" value="Histidine--tRNA ligase chloroplastic/mitochondrial"/>
    <property type="match status" value="1"/>
</dbReference>
<dbReference type="Gene3D" id="3.40.50.800">
    <property type="entry name" value="Anticodon-binding domain"/>
    <property type="match status" value="1"/>
</dbReference>
<dbReference type="Gene3D" id="3.30.930.10">
    <property type="entry name" value="Bira Bifunctional Protein, Domain 2"/>
    <property type="match status" value="1"/>
</dbReference>
<dbReference type="HAMAP" id="MF_00127">
    <property type="entry name" value="His_tRNA_synth"/>
    <property type="match status" value="1"/>
</dbReference>
<dbReference type="InterPro" id="IPR006195">
    <property type="entry name" value="aa-tRNA-synth_II"/>
</dbReference>
<dbReference type="InterPro" id="IPR045864">
    <property type="entry name" value="aa-tRNA-synth_II/BPL/LPL"/>
</dbReference>
<dbReference type="InterPro" id="IPR036621">
    <property type="entry name" value="Anticodon-bd_dom_sf"/>
</dbReference>
<dbReference type="InterPro" id="IPR015807">
    <property type="entry name" value="His-tRNA-ligase"/>
</dbReference>
<dbReference type="InterPro" id="IPR041715">
    <property type="entry name" value="HisRS-like_core"/>
</dbReference>
<dbReference type="InterPro" id="IPR004516">
    <property type="entry name" value="HisRS/HisZ"/>
</dbReference>
<dbReference type="NCBIfam" id="TIGR00442">
    <property type="entry name" value="hisS"/>
    <property type="match status" value="1"/>
</dbReference>
<dbReference type="PANTHER" id="PTHR43707:SF1">
    <property type="entry name" value="HISTIDINE--TRNA LIGASE, MITOCHONDRIAL-RELATED"/>
    <property type="match status" value="1"/>
</dbReference>
<dbReference type="PANTHER" id="PTHR43707">
    <property type="entry name" value="HISTIDYL-TRNA SYNTHETASE"/>
    <property type="match status" value="1"/>
</dbReference>
<dbReference type="Pfam" id="PF13393">
    <property type="entry name" value="tRNA-synt_His"/>
    <property type="match status" value="1"/>
</dbReference>
<dbReference type="PIRSF" id="PIRSF001549">
    <property type="entry name" value="His-tRNA_synth"/>
    <property type="match status" value="1"/>
</dbReference>
<dbReference type="SUPFAM" id="SSF52954">
    <property type="entry name" value="Class II aaRS ABD-related"/>
    <property type="match status" value="1"/>
</dbReference>
<dbReference type="SUPFAM" id="SSF55681">
    <property type="entry name" value="Class II aaRS and biotin synthetases"/>
    <property type="match status" value="1"/>
</dbReference>
<dbReference type="PROSITE" id="PS50862">
    <property type="entry name" value="AA_TRNA_LIGASE_II"/>
    <property type="match status" value="1"/>
</dbReference>
<keyword id="KW-0030">Aminoacyl-tRNA synthetase</keyword>
<keyword id="KW-0067">ATP-binding</keyword>
<keyword id="KW-0963">Cytoplasm</keyword>
<keyword id="KW-0436">Ligase</keyword>
<keyword id="KW-0547">Nucleotide-binding</keyword>
<keyword id="KW-0648">Protein biosynthesis</keyword>
<keyword id="KW-1185">Reference proteome</keyword>
<protein>
    <recommendedName>
        <fullName>Histidine--tRNA ligase</fullName>
        <ecNumber>6.1.1.21</ecNumber>
    </recommendedName>
    <alternativeName>
        <fullName>Histidyl-tRNA synthetase</fullName>
        <shortName>HisRS</shortName>
    </alternativeName>
</protein>
<gene>
    <name type="primary">hisS</name>
    <name type="ordered locus">MG035</name>
</gene>
<proteinExistence type="inferred from homology"/>
<reference key="1">
    <citation type="journal article" date="1995" name="Science">
        <title>The minimal gene complement of Mycoplasma genitalium.</title>
        <authorList>
            <person name="Fraser C.M."/>
            <person name="Gocayne J.D."/>
            <person name="White O."/>
            <person name="Adams M.D."/>
            <person name="Clayton R.A."/>
            <person name="Fleischmann R.D."/>
            <person name="Bult C.J."/>
            <person name="Kerlavage A.R."/>
            <person name="Sutton G.G."/>
            <person name="Kelley J.M."/>
            <person name="Fritchman J.L."/>
            <person name="Weidman J.F."/>
            <person name="Small K.V."/>
            <person name="Sandusky M."/>
            <person name="Fuhrmann J.L."/>
            <person name="Nguyen D.T."/>
            <person name="Utterback T.R."/>
            <person name="Saudek D.M."/>
            <person name="Phillips C.A."/>
            <person name="Merrick J.M."/>
            <person name="Tomb J.-F."/>
            <person name="Dougherty B.A."/>
            <person name="Bott K.F."/>
            <person name="Hu P.-C."/>
            <person name="Lucier T.S."/>
            <person name="Peterson S.N."/>
            <person name="Smith H.O."/>
            <person name="Hutchison C.A. III"/>
            <person name="Venter J.C."/>
        </authorList>
    </citation>
    <scope>NUCLEOTIDE SEQUENCE [LARGE SCALE GENOMIC DNA]</scope>
    <source>
        <strain>ATCC 33530 / DSM 19775 / NCTC 10195 / G37</strain>
    </source>
</reference>
<name>SYH_MYCGE</name>
<accession>P47281</accession>